<feature type="chain" id="PRO_0000066858" description="Potassium channel toxin gamma-KTx 5.1">
    <location>
        <begin position="1"/>
        <end position="47"/>
    </location>
</feature>
<feature type="disulfide bond" evidence="2">
    <location>
        <begin position="5"/>
        <end position="23"/>
    </location>
</feature>
<feature type="disulfide bond" evidence="2">
    <location>
        <begin position="11"/>
        <end position="34"/>
    </location>
</feature>
<feature type="disulfide bond" evidence="2">
    <location>
        <begin position="20"/>
        <end position="39"/>
    </location>
</feature>
<feature type="disulfide bond" evidence="2">
    <location>
        <begin position="24"/>
        <end position="41"/>
    </location>
</feature>
<organism>
    <name type="scientific">Centruroides sculpturatus</name>
    <name type="common">Arizona bark scorpion</name>
    <dbReference type="NCBI Taxonomy" id="218467"/>
    <lineage>
        <taxon>Eukaryota</taxon>
        <taxon>Metazoa</taxon>
        <taxon>Ecdysozoa</taxon>
        <taxon>Arthropoda</taxon>
        <taxon>Chelicerata</taxon>
        <taxon>Arachnida</taxon>
        <taxon>Scorpiones</taxon>
        <taxon>Buthida</taxon>
        <taxon>Buthoidea</taxon>
        <taxon>Buthidae</taxon>
        <taxon>Centruroides</taxon>
    </lineage>
</organism>
<comment type="function">
    <text evidence="2">Reversibly blocks Kv11/ERG potassium channels.</text>
</comment>
<comment type="subcellular location">
    <subcellularLocation>
        <location evidence="3">Secreted</location>
    </subcellularLocation>
</comment>
<comment type="tissue specificity">
    <text evidence="5">Expressed by the venom gland.</text>
</comment>
<comment type="domain">
    <text evidence="1">The presence of a 'disulfide through disulfide knot' structurally defines this protein as a knottin.</text>
</comment>
<comment type="domain">
    <text evidence="2">Has the CSalpha/beta fold, which comprises one or two short alpha helices connected to anti-parallel beta-sheets stabilized by three or four disulfide bonds.</text>
</comment>
<comment type="similarity">
    <text evidence="5">Belongs to the ergtoxin family. Gamma-KTx 5 subfamily.</text>
</comment>
<accession>Q86QU2</accession>
<reference key="1">
    <citation type="journal article" date="2002" name="FEBS Lett.">
        <title>A large number of novel Ergtoxin-like genes and ERG K+-channels blocking peptides from scorpions of the genus Centruroides.</title>
        <authorList>
            <person name="Corona M."/>
            <person name="Gurrola G.B."/>
            <person name="Merino E."/>
            <person name="Cassulini R.R."/>
            <person name="Valdez-Cruz N.A."/>
            <person name="Garcia B."/>
            <person name="Ramirez-Dominguez M.E."/>
            <person name="Coronas F.I."/>
            <person name="Zamudio F.Z."/>
            <person name="Wanke E."/>
            <person name="Possani L.D."/>
        </authorList>
    </citation>
    <scope>NUCLEOTIDE SEQUENCE [MRNA]</scope>
    <scope>NOMENCLATURE</scope>
    <source>
        <tissue>Venom gland</tissue>
    </source>
</reference>
<proteinExistence type="inferred from homology"/>
<keyword id="KW-1015">Disulfide bond</keyword>
<keyword id="KW-0872">Ion channel impairing toxin</keyword>
<keyword id="KW-0960">Knottin</keyword>
<keyword id="KW-0528">Neurotoxin</keyword>
<keyword id="KW-0632">Potassium channel impairing toxin</keyword>
<keyword id="KW-0964">Secreted</keyword>
<keyword id="KW-0800">Toxin</keyword>
<keyword id="KW-1220">Voltage-gated potassium channel impairing toxin</keyword>
<dbReference type="EMBL" id="AY159351">
    <property type="protein sequence ID" value="AAO22229.1"/>
    <property type="molecule type" value="mRNA"/>
</dbReference>
<dbReference type="SMR" id="Q86QU2"/>
<dbReference type="GO" id="GO:0005576">
    <property type="term" value="C:extracellular region"/>
    <property type="evidence" value="ECO:0007669"/>
    <property type="project" value="UniProtKB-SubCell"/>
</dbReference>
<dbReference type="GO" id="GO:0019870">
    <property type="term" value="F:potassium channel inhibitor activity"/>
    <property type="evidence" value="ECO:0007669"/>
    <property type="project" value="InterPro"/>
</dbReference>
<dbReference type="GO" id="GO:0090729">
    <property type="term" value="F:toxin activity"/>
    <property type="evidence" value="ECO:0007669"/>
    <property type="project" value="UniProtKB-KW"/>
</dbReference>
<dbReference type="Gene3D" id="3.30.30.10">
    <property type="entry name" value="Knottin, scorpion toxin-like"/>
    <property type="match status" value="1"/>
</dbReference>
<dbReference type="InterPro" id="IPR012622">
    <property type="entry name" value="Ergtoxin"/>
</dbReference>
<dbReference type="InterPro" id="IPR036574">
    <property type="entry name" value="Scorpion_toxin-like_sf"/>
</dbReference>
<dbReference type="Pfam" id="PF08086">
    <property type="entry name" value="Toxin_17"/>
    <property type="match status" value="1"/>
</dbReference>
<dbReference type="SUPFAM" id="SSF57095">
    <property type="entry name" value="Scorpion toxin-like"/>
    <property type="match status" value="1"/>
</dbReference>
<dbReference type="PROSITE" id="PS60026">
    <property type="entry name" value="ERGTX"/>
    <property type="match status" value="1"/>
</dbReference>
<name>KGX51_CENSC</name>
<evidence type="ECO:0000250" key="1"/>
<evidence type="ECO:0000250" key="2">
    <source>
        <dbReference type="UniProtKB" id="Q86QT3"/>
    </source>
</evidence>
<evidence type="ECO:0000250" key="3">
    <source>
        <dbReference type="UniProtKB" id="Q86QU9"/>
    </source>
</evidence>
<evidence type="ECO:0000303" key="4">
    <source>
    </source>
</evidence>
<evidence type="ECO:0000305" key="5"/>
<protein>
    <recommendedName>
        <fullName evidence="4">Potassium channel toxin gamma-KTx 5.1</fullName>
    </recommendedName>
    <alternativeName>
        <fullName evidence="5">CsErgTx5</fullName>
        <shortName evidence="4">CsErg5</shortName>
        <shortName evidence="4">ErgTx5</shortName>
    </alternativeName>
    <alternativeName>
        <fullName evidence="4">Ergtoxin-like protein</fullName>
    </alternativeName>
</protein>
<sequence length="47" mass="5271">DRDSCVDKSRCAKYGYYGQCEVCCKKAGHNGGTCMFFKCMCVNSKMN</sequence>